<gene>
    <name evidence="1" type="primary">trpD</name>
    <name type="ordered locus">YPDSF_0927</name>
</gene>
<keyword id="KW-0028">Amino-acid biosynthesis</keyword>
<keyword id="KW-0057">Aromatic amino acid biosynthesis</keyword>
<keyword id="KW-0328">Glycosyltransferase</keyword>
<keyword id="KW-0460">Magnesium</keyword>
<keyword id="KW-0479">Metal-binding</keyword>
<keyword id="KW-0808">Transferase</keyword>
<keyword id="KW-0822">Tryptophan biosynthesis</keyword>
<accession>A4TJ65</accession>
<organism>
    <name type="scientific">Yersinia pestis (strain Pestoides F)</name>
    <dbReference type="NCBI Taxonomy" id="386656"/>
    <lineage>
        <taxon>Bacteria</taxon>
        <taxon>Pseudomonadati</taxon>
        <taxon>Pseudomonadota</taxon>
        <taxon>Gammaproteobacteria</taxon>
        <taxon>Enterobacterales</taxon>
        <taxon>Yersiniaceae</taxon>
        <taxon>Yersinia</taxon>
    </lineage>
</organism>
<name>TRPD_YERPP</name>
<evidence type="ECO:0000255" key="1">
    <source>
        <dbReference type="HAMAP-Rule" id="MF_00211"/>
    </source>
</evidence>
<reference key="1">
    <citation type="submission" date="2007-02" db="EMBL/GenBank/DDBJ databases">
        <title>Complete sequence of chromosome of Yersinia pestis Pestoides F.</title>
        <authorList>
            <consortium name="US DOE Joint Genome Institute"/>
            <person name="Copeland A."/>
            <person name="Lucas S."/>
            <person name="Lapidus A."/>
            <person name="Barry K."/>
            <person name="Detter J.C."/>
            <person name="Glavina del Rio T."/>
            <person name="Hammon N."/>
            <person name="Israni S."/>
            <person name="Dalin E."/>
            <person name="Tice H."/>
            <person name="Pitluck S."/>
            <person name="Di Bartolo G."/>
            <person name="Chain P."/>
            <person name="Malfatti S."/>
            <person name="Shin M."/>
            <person name="Vergez L."/>
            <person name="Schmutz J."/>
            <person name="Larimer F."/>
            <person name="Land M."/>
            <person name="Hauser L."/>
            <person name="Worsham P."/>
            <person name="Chu M."/>
            <person name="Bearden S."/>
            <person name="Garcia E."/>
            <person name="Richardson P."/>
        </authorList>
    </citation>
    <scope>NUCLEOTIDE SEQUENCE [LARGE SCALE GENOMIC DNA]</scope>
    <source>
        <strain>Pestoides F</strain>
    </source>
</reference>
<protein>
    <recommendedName>
        <fullName evidence="1">Anthranilate phosphoribosyltransferase</fullName>
        <ecNumber evidence="1">2.4.2.18</ecNumber>
    </recommendedName>
</protein>
<proteinExistence type="inferred from homology"/>
<dbReference type="EC" id="2.4.2.18" evidence="1"/>
<dbReference type="EMBL" id="CP000668">
    <property type="protein sequence ID" value="ABP39327.1"/>
    <property type="molecule type" value="Genomic_DNA"/>
</dbReference>
<dbReference type="SMR" id="A4TJ65"/>
<dbReference type="KEGG" id="ypp:YPDSF_0927"/>
<dbReference type="PATRIC" id="fig|386656.14.peg.2924"/>
<dbReference type="UniPathway" id="UPA00035">
    <property type="reaction ID" value="UER00041"/>
</dbReference>
<dbReference type="GO" id="GO:0005829">
    <property type="term" value="C:cytosol"/>
    <property type="evidence" value="ECO:0007669"/>
    <property type="project" value="TreeGrafter"/>
</dbReference>
<dbReference type="GO" id="GO:0004048">
    <property type="term" value="F:anthranilate phosphoribosyltransferase activity"/>
    <property type="evidence" value="ECO:0007669"/>
    <property type="project" value="UniProtKB-UniRule"/>
</dbReference>
<dbReference type="GO" id="GO:0000287">
    <property type="term" value="F:magnesium ion binding"/>
    <property type="evidence" value="ECO:0007669"/>
    <property type="project" value="UniProtKB-UniRule"/>
</dbReference>
<dbReference type="GO" id="GO:0000162">
    <property type="term" value="P:L-tryptophan biosynthetic process"/>
    <property type="evidence" value="ECO:0007669"/>
    <property type="project" value="UniProtKB-UniRule"/>
</dbReference>
<dbReference type="FunFam" id="1.20.970.10:FF:000003">
    <property type="entry name" value="Anthranilate phosphoribosyltransferase"/>
    <property type="match status" value="1"/>
</dbReference>
<dbReference type="FunFam" id="3.40.1030.10:FF:000002">
    <property type="entry name" value="Anthranilate phosphoribosyltransferase"/>
    <property type="match status" value="1"/>
</dbReference>
<dbReference type="Gene3D" id="3.40.1030.10">
    <property type="entry name" value="Nucleoside phosphorylase/phosphoribosyltransferase catalytic domain"/>
    <property type="match status" value="1"/>
</dbReference>
<dbReference type="Gene3D" id="1.20.970.10">
    <property type="entry name" value="Transferase, Pyrimidine Nucleoside Phosphorylase, Chain C"/>
    <property type="match status" value="1"/>
</dbReference>
<dbReference type="HAMAP" id="MF_00211">
    <property type="entry name" value="TrpD"/>
    <property type="match status" value="1"/>
</dbReference>
<dbReference type="InterPro" id="IPR005940">
    <property type="entry name" value="Anthranilate_Pribosyl_Tfrase"/>
</dbReference>
<dbReference type="InterPro" id="IPR000312">
    <property type="entry name" value="Glycosyl_Trfase_fam3"/>
</dbReference>
<dbReference type="InterPro" id="IPR017459">
    <property type="entry name" value="Glycosyl_Trfase_fam3_N_dom"/>
</dbReference>
<dbReference type="InterPro" id="IPR036320">
    <property type="entry name" value="Glycosyl_Trfase_fam3_N_dom_sf"/>
</dbReference>
<dbReference type="InterPro" id="IPR035902">
    <property type="entry name" value="Nuc_phospho_transferase"/>
</dbReference>
<dbReference type="NCBIfam" id="TIGR01245">
    <property type="entry name" value="trpD"/>
    <property type="match status" value="1"/>
</dbReference>
<dbReference type="PANTHER" id="PTHR43285">
    <property type="entry name" value="ANTHRANILATE PHOSPHORIBOSYLTRANSFERASE"/>
    <property type="match status" value="1"/>
</dbReference>
<dbReference type="PANTHER" id="PTHR43285:SF2">
    <property type="entry name" value="ANTHRANILATE PHOSPHORIBOSYLTRANSFERASE"/>
    <property type="match status" value="1"/>
</dbReference>
<dbReference type="Pfam" id="PF02885">
    <property type="entry name" value="Glycos_trans_3N"/>
    <property type="match status" value="1"/>
</dbReference>
<dbReference type="Pfam" id="PF00591">
    <property type="entry name" value="Glycos_transf_3"/>
    <property type="match status" value="1"/>
</dbReference>
<dbReference type="SUPFAM" id="SSF52418">
    <property type="entry name" value="Nucleoside phosphorylase/phosphoribosyltransferase catalytic domain"/>
    <property type="match status" value="1"/>
</dbReference>
<dbReference type="SUPFAM" id="SSF47648">
    <property type="entry name" value="Nucleoside phosphorylase/phosphoribosyltransferase N-terminal domain"/>
    <property type="match status" value="1"/>
</dbReference>
<feature type="chain" id="PRO_1000043083" description="Anthranilate phosphoribosyltransferase">
    <location>
        <begin position="1"/>
        <end position="332"/>
    </location>
</feature>
<feature type="binding site" evidence="1">
    <location>
        <position position="79"/>
    </location>
    <ligand>
        <name>5-phospho-alpha-D-ribose 1-diphosphate</name>
        <dbReference type="ChEBI" id="CHEBI:58017"/>
    </ligand>
</feature>
<feature type="binding site" evidence="1">
    <location>
        <position position="79"/>
    </location>
    <ligand>
        <name>anthranilate</name>
        <dbReference type="ChEBI" id="CHEBI:16567"/>
        <label>1</label>
    </ligand>
</feature>
<feature type="binding site" evidence="1">
    <location>
        <begin position="82"/>
        <end position="83"/>
    </location>
    <ligand>
        <name>5-phospho-alpha-D-ribose 1-diphosphate</name>
        <dbReference type="ChEBI" id="CHEBI:58017"/>
    </ligand>
</feature>
<feature type="binding site" evidence="1">
    <location>
        <position position="87"/>
    </location>
    <ligand>
        <name>5-phospho-alpha-D-ribose 1-diphosphate</name>
        <dbReference type="ChEBI" id="CHEBI:58017"/>
    </ligand>
</feature>
<feature type="binding site" evidence="1">
    <location>
        <begin position="89"/>
        <end position="92"/>
    </location>
    <ligand>
        <name>5-phospho-alpha-D-ribose 1-diphosphate</name>
        <dbReference type="ChEBI" id="CHEBI:58017"/>
    </ligand>
</feature>
<feature type="binding site" evidence="1">
    <location>
        <position position="91"/>
    </location>
    <ligand>
        <name>Mg(2+)</name>
        <dbReference type="ChEBI" id="CHEBI:18420"/>
        <label>1</label>
    </ligand>
</feature>
<feature type="binding site" evidence="1">
    <location>
        <begin position="107"/>
        <end position="115"/>
    </location>
    <ligand>
        <name>5-phospho-alpha-D-ribose 1-diphosphate</name>
        <dbReference type="ChEBI" id="CHEBI:58017"/>
    </ligand>
</feature>
<feature type="binding site" evidence="1">
    <location>
        <position position="110"/>
    </location>
    <ligand>
        <name>anthranilate</name>
        <dbReference type="ChEBI" id="CHEBI:16567"/>
        <label>1</label>
    </ligand>
</feature>
<feature type="binding site" evidence="1">
    <location>
        <position position="119"/>
    </location>
    <ligand>
        <name>5-phospho-alpha-D-ribose 1-diphosphate</name>
        <dbReference type="ChEBI" id="CHEBI:58017"/>
    </ligand>
</feature>
<feature type="binding site" evidence="1">
    <location>
        <position position="165"/>
    </location>
    <ligand>
        <name>anthranilate</name>
        <dbReference type="ChEBI" id="CHEBI:16567"/>
        <label>2</label>
    </ligand>
</feature>
<feature type="binding site" evidence="1">
    <location>
        <position position="223"/>
    </location>
    <ligand>
        <name>Mg(2+)</name>
        <dbReference type="ChEBI" id="CHEBI:18420"/>
        <label>2</label>
    </ligand>
</feature>
<feature type="binding site" evidence="1">
    <location>
        <position position="224"/>
    </location>
    <ligand>
        <name>Mg(2+)</name>
        <dbReference type="ChEBI" id="CHEBI:18420"/>
        <label>1</label>
    </ligand>
</feature>
<feature type="binding site" evidence="1">
    <location>
        <position position="224"/>
    </location>
    <ligand>
        <name>Mg(2+)</name>
        <dbReference type="ChEBI" id="CHEBI:18420"/>
        <label>2</label>
    </ligand>
</feature>
<sequence length="332" mass="35499">MQHLFEKLFRAESMSQEESQQLFAAIVRGELEPSQLAAVLISMKVRGETPAEIAGAAQALLADAQHFPRPDYLFADIVGTGGDGTNSINISTASAFVAASCGVKVAKHGNRSVSSRSGSSDLLAAFGIRLDMSAEQSRLALDDLGVCFLFAPQYHTGFRHAMPVRQQLKTRTLFNVLGPLINPARPPLALIGVYSPELVLPIAQTLKVLGYQRAAVVHGGGMDEVAIHAPTQVAELNNGSIESYQLTPEDFGLNRYPLAALQGGMPEENRDILARLLQGKGETAHAAAVAANVALLLKLYGQENLRHNAQQALEMIHSGQAFDRVTALAARG</sequence>
<comment type="function">
    <text evidence="1">Catalyzes the transfer of the phosphoribosyl group of 5-phosphorylribose-1-pyrophosphate (PRPP) to anthranilate to yield N-(5'-phosphoribosyl)-anthranilate (PRA).</text>
</comment>
<comment type="catalytic activity">
    <reaction evidence="1">
        <text>N-(5-phospho-beta-D-ribosyl)anthranilate + diphosphate = 5-phospho-alpha-D-ribose 1-diphosphate + anthranilate</text>
        <dbReference type="Rhea" id="RHEA:11768"/>
        <dbReference type="ChEBI" id="CHEBI:16567"/>
        <dbReference type="ChEBI" id="CHEBI:18277"/>
        <dbReference type="ChEBI" id="CHEBI:33019"/>
        <dbReference type="ChEBI" id="CHEBI:58017"/>
        <dbReference type="EC" id="2.4.2.18"/>
    </reaction>
</comment>
<comment type="cofactor">
    <cofactor evidence="1">
        <name>Mg(2+)</name>
        <dbReference type="ChEBI" id="CHEBI:18420"/>
    </cofactor>
    <text evidence="1">Binds 2 magnesium ions per monomer.</text>
</comment>
<comment type="pathway">
    <text evidence="1">Amino-acid biosynthesis; L-tryptophan biosynthesis; L-tryptophan from chorismate: step 2/5.</text>
</comment>
<comment type="subunit">
    <text evidence="1">Homodimer.</text>
</comment>
<comment type="similarity">
    <text evidence="1">Belongs to the anthranilate phosphoribosyltransferase family.</text>
</comment>